<gene>
    <name type="primary">OPG106</name>
    <name type="ORF">H1L</name>
    <name type="ORF">I1L</name>
</gene>
<accession>P0DOQ5</accession>
<accession>P33064</accession>
<evidence type="ECO:0000250" key="1">
    <source>
        <dbReference type="UniProtKB" id="P07239"/>
    </source>
</evidence>
<evidence type="ECO:0000255" key="2">
    <source>
        <dbReference type="PROSITE-ProRule" id="PRU00160"/>
    </source>
</evidence>
<evidence type="ECO:0000269" key="3">
    <source>
    </source>
</evidence>
<evidence type="ECO:0000269" key="4">
    <source>
    </source>
</evidence>
<evidence type="ECO:0000305" key="5"/>
<evidence type="ECO:0007744" key="6">
    <source>
        <dbReference type="PDB" id="2P4D"/>
    </source>
</evidence>
<evidence type="ECO:0007829" key="7">
    <source>
        <dbReference type="PDB" id="2P4D"/>
    </source>
</evidence>
<organismHost>
    <name type="scientific">Homo sapiens</name>
    <name type="common">Human</name>
    <dbReference type="NCBI Taxonomy" id="9606"/>
</organismHost>
<proteinExistence type="evidence at protein level"/>
<comment type="function">
    <text evidence="1">Serine/tyrosine phosphatase which down-regulates cellular antiviral response by dephosphorylating activated host STAT1 and blocking interferon (IFN)-stimulated innate immune responses. Dephosphorylates the OPG144 protein.</text>
</comment>
<comment type="catalytic activity">
    <reaction evidence="3 4">
        <text>O-phospho-L-tyrosyl-[protein] + H2O = L-tyrosyl-[protein] + phosphate</text>
        <dbReference type="Rhea" id="RHEA:10684"/>
        <dbReference type="Rhea" id="RHEA-COMP:10136"/>
        <dbReference type="Rhea" id="RHEA-COMP:20101"/>
        <dbReference type="ChEBI" id="CHEBI:15377"/>
        <dbReference type="ChEBI" id="CHEBI:43474"/>
        <dbReference type="ChEBI" id="CHEBI:46858"/>
        <dbReference type="ChEBI" id="CHEBI:61978"/>
        <dbReference type="EC" id="3.1.3.48"/>
    </reaction>
</comment>
<comment type="catalytic activity">
    <reaction evidence="3 4">
        <text>O-phospho-L-seryl-[protein] + H2O = L-seryl-[protein] + phosphate</text>
        <dbReference type="Rhea" id="RHEA:20629"/>
        <dbReference type="Rhea" id="RHEA-COMP:9863"/>
        <dbReference type="Rhea" id="RHEA-COMP:11604"/>
        <dbReference type="ChEBI" id="CHEBI:15377"/>
        <dbReference type="ChEBI" id="CHEBI:29999"/>
        <dbReference type="ChEBI" id="CHEBI:43474"/>
        <dbReference type="ChEBI" id="CHEBI:83421"/>
    </reaction>
</comment>
<comment type="activity regulation">
    <text evidence="4">Inhibited by NSC-62914, NSC-28086, NSC-105687, NSC-23173, 540211 and 217691 with IC50 values of 48, 51, 212, 342, 4 and 11 uM, respectively.</text>
</comment>
<comment type="biophysicochemical properties">
    <kinetics>
        <KM evidence="3">228 uM for para-nitrophenyl phosphate</KM>
    </kinetics>
    <phDependence>
        <text evidence="3">Optimum pH is 6.5-7.0.</text>
    </phDependence>
</comment>
<comment type="subunit">
    <text evidence="1">Homodimer.</text>
</comment>
<comment type="subcellular location">
    <subcellularLocation>
        <location evidence="1">Virion</location>
    </subcellularLocation>
    <subcellularLocation>
        <location evidence="1">Host cytoplasm</location>
    </subcellularLocation>
    <text evidence="1">Approximately 200 molecules of OPG106 are packaged within the virion and are essential for the viability of the virus.</text>
</comment>
<comment type="induction">
    <text>Expressed in the late phase of the viral replicative cycle.</text>
</comment>
<comment type="similarity">
    <text evidence="5">Belongs to the protein-tyrosine phosphatase family. Non-receptor class dual specificity subfamily.</text>
</comment>
<feature type="chain" id="PRO_0000094869" description="Dual specificity protein phosphatase OPG106">
    <location>
        <begin position="1"/>
        <end position="171"/>
    </location>
</feature>
<feature type="domain" description="Tyrosine-protein phosphatase" evidence="2">
    <location>
        <begin position="23"/>
        <end position="171"/>
    </location>
</feature>
<feature type="active site" description="Phosphocysteine intermediate" evidence="2 4">
    <location>
        <position position="110"/>
    </location>
</feature>
<feature type="helix" evidence="7">
    <location>
        <begin position="6"/>
        <end position="14"/>
    </location>
</feature>
<feature type="strand" evidence="7">
    <location>
        <begin position="31"/>
        <end position="37"/>
    </location>
</feature>
<feature type="helix" evidence="7">
    <location>
        <begin position="39"/>
        <end position="44"/>
    </location>
</feature>
<feature type="helix" evidence="7">
    <location>
        <begin position="45"/>
        <end position="47"/>
    </location>
</feature>
<feature type="strand" evidence="7">
    <location>
        <begin position="53"/>
        <end position="57"/>
    </location>
</feature>
<feature type="strand" evidence="7">
    <location>
        <begin position="59"/>
        <end position="61"/>
    </location>
</feature>
<feature type="strand" evidence="7">
    <location>
        <begin position="71"/>
        <end position="74"/>
    </location>
</feature>
<feature type="strand" evidence="7">
    <location>
        <begin position="80"/>
        <end position="83"/>
    </location>
</feature>
<feature type="helix" evidence="7">
    <location>
        <begin position="86"/>
        <end position="88"/>
    </location>
</feature>
<feature type="helix" evidence="7">
    <location>
        <begin position="89"/>
        <end position="102"/>
    </location>
</feature>
<feature type="strand" evidence="7">
    <location>
        <begin position="106"/>
        <end position="109"/>
    </location>
</feature>
<feature type="strand" evidence="7">
    <location>
        <begin position="111"/>
        <end position="115"/>
    </location>
</feature>
<feature type="helix" evidence="7">
    <location>
        <begin position="116"/>
        <end position="128"/>
    </location>
</feature>
<feature type="helix" evidence="7">
    <location>
        <begin position="134"/>
        <end position="149"/>
    </location>
</feature>
<feature type="helix" evidence="7">
    <location>
        <begin position="156"/>
        <end position="166"/>
    </location>
</feature>
<sequence length="171" mass="19746">MDKKSLYKYLLLRSTGDMRRAKSPTIMTRVTNNVYLGNYKNAMNAPSSEVKFKYVLNLTMDKYTLPNSNINIIHIPLVDDTTTDISKYFDDVTAFLSKCDQRNEPVLVHCVAGVNRSGAMILAYLMSKNKESSPMLYFLYVYHSMRDLRGAFVENPSFKRQIIEKYVIDKN</sequence>
<organism>
    <name type="scientific">Variola virus (isolate Human/India/Ind3/1967)</name>
    <name type="common">VARV</name>
    <name type="synonym">Smallpox virus</name>
    <dbReference type="NCBI Taxonomy" id="587200"/>
    <lineage>
        <taxon>Viruses</taxon>
        <taxon>Varidnaviria</taxon>
        <taxon>Bamfordvirae</taxon>
        <taxon>Nucleocytoviricota</taxon>
        <taxon>Pokkesviricetes</taxon>
        <taxon>Chitovirales</taxon>
        <taxon>Poxviridae</taxon>
        <taxon>Chordopoxvirinae</taxon>
        <taxon>Orthopoxvirus</taxon>
        <taxon>Variola virus</taxon>
    </lineage>
</organism>
<keyword id="KW-0002">3D-structure</keyword>
<keyword id="KW-1035">Host cytoplasm</keyword>
<keyword id="KW-0945">Host-virus interaction</keyword>
<keyword id="KW-0378">Hydrolase</keyword>
<keyword id="KW-1090">Inhibition of host innate immune response by virus</keyword>
<keyword id="KW-1114">Inhibition of host interferon signaling pathway by virus</keyword>
<keyword id="KW-1105">Inhibition of host STAT1 by virus</keyword>
<keyword id="KW-0922">Interferon antiviral system evasion</keyword>
<keyword id="KW-0426">Late protein</keyword>
<keyword id="KW-0904">Protein phosphatase</keyword>
<keyword id="KW-1185">Reference proteome</keyword>
<keyword id="KW-0899">Viral immunoevasion</keyword>
<keyword id="KW-0946">Virion</keyword>
<dbReference type="EC" id="3.1.3.-"/>
<dbReference type="EC" id="3.1.3.48" evidence="3 4"/>
<dbReference type="EMBL" id="X67119">
    <property type="protein sequence ID" value="CAA47583.1"/>
    <property type="molecule type" value="Genomic_DNA"/>
</dbReference>
<dbReference type="EMBL" id="S55844">
    <property type="protein sequence ID" value="AAB24680.1"/>
    <property type="molecule type" value="Genomic_DNA"/>
</dbReference>
<dbReference type="EMBL" id="X69198">
    <property type="protein sequence ID" value="CAA49025.1"/>
    <property type="molecule type" value="Genomic_DNA"/>
</dbReference>
<dbReference type="PIR" id="I36845">
    <property type="entry name" value="I36845"/>
</dbReference>
<dbReference type="RefSeq" id="NP_042128.1">
    <property type="nucleotide sequence ID" value="NC_001611.1"/>
</dbReference>
<dbReference type="PDB" id="2P4D">
    <property type="method" value="X-ray"/>
    <property type="resolution" value="1.80 A"/>
    <property type="chains" value="A=1-171"/>
</dbReference>
<dbReference type="PDBsum" id="2P4D"/>
<dbReference type="SMR" id="P0DOQ5"/>
<dbReference type="GeneID" id="1486439"/>
<dbReference type="KEGG" id="vg:1486439"/>
<dbReference type="Proteomes" id="UP000002060">
    <property type="component" value="Segment"/>
</dbReference>
<dbReference type="GO" id="GO:0030430">
    <property type="term" value="C:host cell cytoplasm"/>
    <property type="evidence" value="ECO:0007669"/>
    <property type="project" value="UniProtKB-SubCell"/>
</dbReference>
<dbReference type="GO" id="GO:0044423">
    <property type="term" value="C:virion component"/>
    <property type="evidence" value="ECO:0007669"/>
    <property type="project" value="UniProtKB-KW"/>
</dbReference>
<dbReference type="GO" id="GO:0004722">
    <property type="term" value="F:protein serine/threonine phosphatase activity"/>
    <property type="evidence" value="ECO:0007669"/>
    <property type="project" value="RHEA"/>
</dbReference>
<dbReference type="GO" id="GO:0004725">
    <property type="term" value="F:protein tyrosine phosphatase activity"/>
    <property type="evidence" value="ECO:0007669"/>
    <property type="project" value="UniProtKB-EC"/>
</dbReference>
<dbReference type="GO" id="GO:0043409">
    <property type="term" value="P:negative regulation of MAPK cascade"/>
    <property type="evidence" value="ECO:0007669"/>
    <property type="project" value="TreeGrafter"/>
</dbReference>
<dbReference type="GO" id="GO:0052170">
    <property type="term" value="P:symbiont-mediated suppression of host innate immune response"/>
    <property type="evidence" value="ECO:0007669"/>
    <property type="project" value="UniProtKB-KW"/>
</dbReference>
<dbReference type="GO" id="GO:0039563">
    <property type="term" value="P:symbiont-mediated suppression of host JAK-STAT cascade via inhibition of STAT1 activity"/>
    <property type="evidence" value="ECO:0007669"/>
    <property type="project" value="UniProtKB-KW"/>
</dbReference>
<dbReference type="GO" id="GO:0039502">
    <property type="term" value="P:symbiont-mediated suppression of host type I interferon-mediated signaling pathway"/>
    <property type="evidence" value="ECO:0007669"/>
    <property type="project" value="UniProtKB-KW"/>
</dbReference>
<dbReference type="CDD" id="cd14498">
    <property type="entry name" value="DSP"/>
    <property type="match status" value="1"/>
</dbReference>
<dbReference type="Gene3D" id="3.90.190.10">
    <property type="entry name" value="Protein tyrosine phosphatase superfamily"/>
    <property type="match status" value="1"/>
</dbReference>
<dbReference type="InterPro" id="IPR000340">
    <property type="entry name" value="Dual-sp_phosphatase_cat-dom"/>
</dbReference>
<dbReference type="InterPro" id="IPR029021">
    <property type="entry name" value="Prot-tyrosine_phosphatase-like"/>
</dbReference>
<dbReference type="InterPro" id="IPR016130">
    <property type="entry name" value="Tyr_Pase_AS"/>
</dbReference>
<dbReference type="InterPro" id="IPR003595">
    <property type="entry name" value="Tyr_Pase_cat"/>
</dbReference>
<dbReference type="InterPro" id="IPR000387">
    <property type="entry name" value="Tyr_Pase_dom"/>
</dbReference>
<dbReference type="InterPro" id="IPR020422">
    <property type="entry name" value="TYR_PHOSPHATASE_DUAL_dom"/>
</dbReference>
<dbReference type="PANTHER" id="PTHR10159">
    <property type="entry name" value="DUAL SPECIFICITY PROTEIN PHOSPHATASE"/>
    <property type="match status" value="1"/>
</dbReference>
<dbReference type="PANTHER" id="PTHR10159:SF519">
    <property type="entry name" value="DUAL SPECIFICITY PROTEIN PHOSPHATASE MPK3"/>
    <property type="match status" value="1"/>
</dbReference>
<dbReference type="Pfam" id="PF00782">
    <property type="entry name" value="DSPc"/>
    <property type="match status" value="1"/>
</dbReference>
<dbReference type="SMART" id="SM00195">
    <property type="entry name" value="DSPc"/>
    <property type="match status" value="1"/>
</dbReference>
<dbReference type="SMART" id="SM00404">
    <property type="entry name" value="PTPc_motif"/>
    <property type="match status" value="1"/>
</dbReference>
<dbReference type="SUPFAM" id="SSF52799">
    <property type="entry name" value="(Phosphotyrosine protein) phosphatases II"/>
    <property type="match status" value="1"/>
</dbReference>
<dbReference type="PROSITE" id="PS00383">
    <property type="entry name" value="TYR_PHOSPHATASE_1"/>
    <property type="match status" value="1"/>
</dbReference>
<dbReference type="PROSITE" id="PS50056">
    <property type="entry name" value="TYR_PHOSPHATASE_2"/>
    <property type="match status" value="1"/>
</dbReference>
<dbReference type="PROSITE" id="PS50054">
    <property type="entry name" value="TYR_PHOSPHATASE_DUAL"/>
    <property type="match status" value="1"/>
</dbReference>
<protein>
    <recommendedName>
        <fullName>Dual specificity protein phosphatase OPG106</fullName>
        <ecNumber>3.1.3.-</ecNumber>
        <ecNumber evidence="3 4">3.1.3.48</ecNumber>
    </recommendedName>
    <alternativeName>
        <fullName>Late protein H1</fullName>
    </alternativeName>
</protein>
<name>DUSP_VAR67</name>
<reference key="1">
    <citation type="journal article" date="1993" name="Virus Res.">
        <title>Nucleotide sequence analysis of variola virus HindIII M, L, I genome fragments.</title>
        <authorList>
            <person name="Shchelkunov S.N."/>
            <person name="Blinov V.M."/>
            <person name="Totmenin A.V."/>
            <person name="Marennikova S.S."/>
            <person name="Kolykhalov A.A."/>
            <person name="Frolov I.V."/>
            <person name="Chizhikov V.E."/>
            <person name="Gytorov V.V."/>
            <person name="Gashikov P.V."/>
            <person name="Belanov E.F."/>
            <person name="Belavin P.A."/>
            <person name="Resenchuk S.M."/>
            <person name="Andzhaparidze O.G."/>
            <person name="Sandakhchiev L.S."/>
        </authorList>
    </citation>
    <scope>NUCLEOTIDE SEQUENCE [GENOMIC DNA]</scope>
</reference>
<reference key="2">
    <citation type="journal article" date="1993" name="FEBS Lett.">
        <title>Genes of variola and vaccinia viruses necessary to overcome the host protective mechanisms.</title>
        <authorList>
            <person name="Shchelkunov S.N."/>
            <person name="Blinov V.M."/>
            <person name="Sandakhchiev L.S."/>
        </authorList>
    </citation>
    <scope>NUCLEOTIDE SEQUENCE [LARGE SCALE GENOMIC DNA]</scope>
</reference>
<reference key="3">
    <citation type="journal article" date="2006" name="Protein Expr. Purif.">
        <title>Overproduction, purification, and biochemical characterization of the dual specificity H1 protein phosphatase encoded by variola major virus.</title>
        <authorList>
            <person name="Tropea J.E."/>
            <person name="Phan J."/>
            <person name="Waugh D.S."/>
        </authorList>
    </citation>
    <scope>CATALYTIC ACTIVITY</scope>
    <scope>SUBUNIT</scope>
    <scope>BIOPHYSICOCHEMICAL PROPERTIES</scope>
</reference>
<reference evidence="6" key="4">
    <citation type="journal article" date="2007" name="Acta Crystallogr. D">
        <title>Structure-assisted discovery of Variola major H1 phosphatase inhibitors.</title>
        <authorList>
            <person name="Phan J."/>
            <person name="Tropea J.E."/>
            <person name="Waugh D.S."/>
        </authorList>
    </citation>
    <scope>X-RAY CRYSTALLOGRAPHY (1.80 ANGSTROMS)</scope>
    <scope>CATALYTIC ACTIVITY</scope>
    <scope>SUBUNIT</scope>
    <scope>ACTIVITY REGULATION</scope>
    <scope>ACTIVE SITE</scope>
</reference>